<organism>
    <name type="scientific">Saccharolobus islandicus (strain M.16.4 / Kamchatka #3)</name>
    <name type="common">Sulfolobus islandicus</name>
    <dbReference type="NCBI Taxonomy" id="426118"/>
    <lineage>
        <taxon>Archaea</taxon>
        <taxon>Thermoproteota</taxon>
        <taxon>Thermoprotei</taxon>
        <taxon>Sulfolobales</taxon>
        <taxon>Sulfolobaceae</taxon>
        <taxon>Saccharolobus</taxon>
    </lineage>
</organism>
<dbReference type="EC" id="4.1.1.19" evidence="1"/>
<dbReference type="EMBL" id="CP001402">
    <property type="protein sequence ID" value="ACR42186.1"/>
    <property type="molecule type" value="Genomic_DNA"/>
</dbReference>
<dbReference type="SMR" id="C4KHX2"/>
<dbReference type="KEGG" id="sid:M164_1585"/>
<dbReference type="HOGENOM" id="CLU_125470_2_1_2"/>
<dbReference type="UniPathway" id="UPA00186">
    <property type="reaction ID" value="UER00284"/>
</dbReference>
<dbReference type="Proteomes" id="UP000001479">
    <property type="component" value="Chromosome"/>
</dbReference>
<dbReference type="GO" id="GO:0005829">
    <property type="term" value="C:cytosol"/>
    <property type="evidence" value="ECO:0007669"/>
    <property type="project" value="TreeGrafter"/>
</dbReference>
<dbReference type="GO" id="GO:0008792">
    <property type="term" value="F:arginine decarboxylase activity"/>
    <property type="evidence" value="ECO:0007669"/>
    <property type="project" value="UniProtKB-UniRule"/>
</dbReference>
<dbReference type="GO" id="GO:0006527">
    <property type="term" value="P:arginine catabolic process"/>
    <property type="evidence" value="ECO:0007669"/>
    <property type="project" value="UniProtKB-UniRule"/>
</dbReference>
<dbReference type="GO" id="GO:0006596">
    <property type="term" value="P:polyamine biosynthetic process"/>
    <property type="evidence" value="ECO:0007669"/>
    <property type="project" value="UniProtKB-UniRule"/>
</dbReference>
<dbReference type="FunFam" id="3.60.90.10:FF:000005">
    <property type="entry name" value="Arginine decarboxylase proenzyme"/>
    <property type="match status" value="1"/>
</dbReference>
<dbReference type="Gene3D" id="3.60.90.10">
    <property type="entry name" value="S-adenosylmethionine decarboxylase"/>
    <property type="match status" value="1"/>
</dbReference>
<dbReference type="HAMAP" id="MF_00464">
    <property type="entry name" value="AdoMetDC_1"/>
    <property type="match status" value="1"/>
</dbReference>
<dbReference type="HAMAP" id="MF_01298">
    <property type="entry name" value="ArgDC"/>
    <property type="match status" value="1"/>
</dbReference>
<dbReference type="InterPro" id="IPR003826">
    <property type="entry name" value="AdoMetDC_fam_prok"/>
</dbReference>
<dbReference type="InterPro" id="IPR027549">
    <property type="entry name" value="ArgDC"/>
</dbReference>
<dbReference type="InterPro" id="IPR016067">
    <property type="entry name" value="S-AdoMet_deCO2ase_core"/>
</dbReference>
<dbReference type="InterPro" id="IPR017716">
    <property type="entry name" value="S-AdoMet_deCOase_pro-enz"/>
</dbReference>
<dbReference type="NCBIfam" id="TIGR03330">
    <property type="entry name" value="SAM_DCase_Bsu"/>
    <property type="match status" value="1"/>
</dbReference>
<dbReference type="PANTHER" id="PTHR33866">
    <property type="entry name" value="S-ADENOSYLMETHIONINE DECARBOXYLASE PROENZYME"/>
    <property type="match status" value="1"/>
</dbReference>
<dbReference type="PANTHER" id="PTHR33866:SF2">
    <property type="entry name" value="S-ADENOSYLMETHIONINE DECARBOXYLASE PROENZYME"/>
    <property type="match status" value="1"/>
</dbReference>
<dbReference type="Pfam" id="PF02675">
    <property type="entry name" value="AdoMet_dc"/>
    <property type="match status" value="1"/>
</dbReference>
<dbReference type="SUPFAM" id="SSF56276">
    <property type="entry name" value="S-adenosylmethionine decarboxylase"/>
    <property type="match status" value="1"/>
</dbReference>
<feature type="chain" id="PRO_1000214227" description="Arginine decarboxylase beta chain" evidence="1">
    <location>
        <begin position="1"/>
        <end position="81"/>
    </location>
</feature>
<feature type="chain" id="PRO_1000214228" description="Arginine decarboxylase alpha chain" evidence="1">
    <location>
        <begin position="82"/>
        <end position="134"/>
    </location>
</feature>
<feature type="active site" description="Schiff-base intermediate with substrate; via pyruvic acid" evidence="1">
    <location>
        <position position="82"/>
    </location>
</feature>
<feature type="active site" description="Proton acceptor; for processing activity" evidence="1">
    <location>
        <position position="87"/>
    </location>
</feature>
<feature type="active site" description="Proton donor; for catalytic activity" evidence="1">
    <location>
        <position position="102"/>
    </location>
</feature>
<feature type="site" description="Cleavage (non-hydrolytic); by autolysis" evidence="1">
    <location>
        <begin position="81"/>
        <end position="82"/>
    </location>
</feature>
<feature type="modified residue" description="Pyruvic acid (Ser); by autocatalysis" evidence="1">
    <location>
        <position position="82"/>
    </location>
</feature>
<reference key="1">
    <citation type="journal article" date="2009" name="Proc. Natl. Acad. Sci. U.S.A.">
        <title>Biogeography of the Sulfolobus islandicus pan-genome.</title>
        <authorList>
            <person name="Reno M.L."/>
            <person name="Held N.L."/>
            <person name="Fields C.J."/>
            <person name="Burke P.V."/>
            <person name="Whitaker R.J."/>
        </authorList>
    </citation>
    <scope>NUCLEOTIDE SEQUENCE [LARGE SCALE GENOMIC DNA]</scope>
    <source>
        <strain>M.16.4 / Kamchatka #3</strain>
    </source>
</reference>
<evidence type="ECO:0000255" key="1">
    <source>
        <dbReference type="HAMAP-Rule" id="MF_01298"/>
    </source>
</evidence>
<proteinExistence type="inferred from homology"/>
<name>ARGDC_SACI6</name>
<accession>C4KHX2</accession>
<sequence>MSEQEVLQKNNSPEGKEDRIIGKHVFGNLYDIDAERLNDKEFLEKLVLEAVNIAHMKLVEIKAWSFGGKKGGVSVIALVEESHIALHTWNEYNYATLDVYTCGEDSDPQSAFAHIVNALNPKRYQMFYADRSSQ</sequence>
<protein>
    <recommendedName>
        <fullName evidence="1">Arginine decarboxylase proenzyme</fullName>
        <shortName evidence="1">ADC</shortName>
        <shortName evidence="1">ArgDC</shortName>
        <ecNumber evidence="1">4.1.1.19</ecNumber>
    </recommendedName>
    <alternativeName>
        <fullName evidence="1">Pyruvoyl-dependent arginine decarboxylase</fullName>
    </alternativeName>
    <component>
        <recommendedName>
            <fullName evidence="1">Arginine decarboxylase beta chain</fullName>
        </recommendedName>
    </component>
    <component>
        <recommendedName>
            <fullName evidence="1">Arginine decarboxylase alpha chain</fullName>
        </recommendedName>
    </component>
</protein>
<comment type="function">
    <text evidence="1">Specifically catalyzes the decarboxylation of L-arginine to agmatine. Has no S-adenosylmethionine decarboxylase (AdoMetDC) activity.</text>
</comment>
<comment type="catalytic activity">
    <reaction evidence="1">
        <text>L-arginine + H(+) = agmatine + CO2</text>
        <dbReference type="Rhea" id="RHEA:17641"/>
        <dbReference type="ChEBI" id="CHEBI:15378"/>
        <dbReference type="ChEBI" id="CHEBI:16526"/>
        <dbReference type="ChEBI" id="CHEBI:32682"/>
        <dbReference type="ChEBI" id="CHEBI:58145"/>
        <dbReference type="EC" id="4.1.1.19"/>
    </reaction>
</comment>
<comment type="cofactor">
    <cofactor evidence="1">
        <name>pyruvate</name>
        <dbReference type="ChEBI" id="CHEBI:15361"/>
    </cofactor>
    <text evidence="1">Binds 1 pyruvoyl group covalently per subunit.</text>
</comment>
<comment type="pathway">
    <text evidence="1">Amine and polyamine biosynthesis; agmatine biosynthesis; agmatine from L-arginine: step 1/1.</text>
</comment>
<comment type="subunit">
    <text evidence="1">Heterooctamer of four alpha and four beta chains arranged as a tetramer of alpha/beta heterodimers.</text>
</comment>
<comment type="PTM">
    <text evidence="1">Is synthesized initially as an inactive proenzyme. Formation of the active enzyme involves a self-maturation process in which the active site pyruvoyl group is generated from an internal serine residue via an autocatalytic post-translational modification. Two non-identical subunits are generated from the proenzyme in this reaction, and the pyruvate is formed at the N-terminus of the alpha chain, which is derived from the carboxyl end of the proenzyme. The post-translation cleavage follows an unusual pathway, termed non-hydrolytic serinolysis, in which the side chain hydroxyl group of the serine supplies its oxygen atom to form the C-terminus of the beta chain, while the remainder of the serine residue undergoes an oxidative deamination to produce ammonia and the pyruvoyl group blocking the N-terminus of the alpha chain.</text>
</comment>
<comment type="similarity">
    <text evidence="1">Belongs to the prokaryotic AdoMetDC family. Type 1 subfamily.</text>
</comment>
<keyword id="KW-0068">Autocatalytic cleavage</keyword>
<keyword id="KW-0210">Decarboxylase</keyword>
<keyword id="KW-0456">Lyase</keyword>
<keyword id="KW-0620">Polyamine biosynthesis</keyword>
<keyword id="KW-0670">Pyruvate</keyword>
<keyword id="KW-0704">Schiff base</keyword>
<keyword id="KW-0865">Zymogen</keyword>
<gene>
    <name type="ordered locus">M164_1585</name>
</gene>